<organism>
    <name type="scientific">Haloarcula marismortui (strain ATCC 43049 / DSM 3752 / JCM 8966 / VKM B-1809)</name>
    <name type="common">Halobacterium marismortui</name>
    <dbReference type="NCBI Taxonomy" id="272569"/>
    <lineage>
        <taxon>Archaea</taxon>
        <taxon>Methanobacteriati</taxon>
        <taxon>Methanobacteriota</taxon>
        <taxon>Stenosarchaea group</taxon>
        <taxon>Halobacteria</taxon>
        <taxon>Halobacteriales</taxon>
        <taxon>Haloarculaceae</taxon>
        <taxon>Haloarcula</taxon>
    </lineage>
</organism>
<sequence>MTGNDPFANALSALNNAESVGHLEQTVSPASNEIGSVLEVFYDRGYIDGFSFVDDGKAGEFEVELKGAINECGPVKPRYSAGADEFEKWEKRFLPARDYGTLVVTTSHGIMSHYEAREQGVGGQVIAYVY</sequence>
<comment type="function">
    <text evidence="1">One of the primary rRNA binding proteins, it binds directly to 16S rRNA central domain where it helps coordinate assembly of the platform of the 30S subunit.</text>
</comment>
<comment type="subunit">
    <text evidence="1 2">Part of the 30S ribosomal subunit.</text>
</comment>
<comment type="similarity">
    <text evidence="1">Belongs to the universal ribosomal protein uS8 family.</text>
</comment>
<protein>
    <recommendedName>
        <fullName evidence="1">Small ribosomal subunit protein uS8</fullName>
    </recommendedName>
    <alternativeName>
        <fullName evidence="3">30S ribosomal protein S8</fullName>
    </alternativeName>
    <alternativeName>
        <fullName>HS16</fullName>
    </alternativeName>
    <alternativeName>
        <fullName>HmaS8</fullName>
    </alternativeName>
</protein>
<name>RS8_HALMA</name>
<feature type="initiator methionine" description="Removed" evidence="2">
    <location>
        <position position="1"/>
    </location>
</feature>
<feature type="chain" id="PRO_0000126536" description="Small ribosomal subunit protein uS8">
    <location>
        <begin position="2"/>
        <end position="130"/>
    </location>
</feature>
<feature type="sequence conflict" description="In Ref. 3; AA sequence." evidence="3" ref="3">
    <location>
        <begin position="87"/>
        <end position="89"/>
    </location>
</feature>
<feature type="sequence conflict" description="In Ref. 3; AA sequence." evidence="3" ref="3">
    <original>H</original>
    <variation>V</variation>
    <location>
        <position position="108"/>
    </location>
</feature>
<proteinExistence type="evidence at protein level"/>
<keyword id="KW-0903">Direct protein sequencing</keyword>
<keyword id="KW-1185">Reference proteome</keyword>
<keyword id="KW-0687">Ribonucleoprotein</keyword>
<keyword id="KW-0689">Ribosomal protein</keyword>
<keyword id="KW-0694">RNA-binding</keyword>
<keyword id="KW-0699">rRNA-binding</keyword>
<dbReference type="EMBL" id="X58395">
    <property type="protein sequence ID" value="CAA41286.1"/>
    <property type="molecule type" value="Genomic_DNA"/>
</dbReference>
<dbReference type="EMBL" id="AY596297">
    <property type="protein sequence ID" value="AAV46515.1"/>
    <property type="molecule type" value="Genomic_DNA"/>
</dbReference>
<dbReference type="PIR" id="S16537">
    <property type="entry name" value="S16537"/>
</dbReference>
<dbReference type="RefSeq" id="WP_004516956.1">
    <property type="nucleotide sequence ID" value="NZ_CP039138.1"/>
</dbReference>
<dbReference type="SMR" id="P12742"/>
<dbReference type="STRING" id="272569.rrnAC1597"/>
<dbReference type="PaxDb" id="272569-rrnAC1597"/>
<dbReference type="EnsemblBacteria" id="AAV46515">
    <property type="protein sequence ID" value="AAV46515"/>
    <property type="gene ID" value="rrnAC1597"/>
</dbReference>
<dbReference type="KEGG" id="hma:rrnAC1597"/>
<dbReference type="PATRIC" id="fig|272569.17.peg.2286"/>
<dbReference type="eggNOG" id="arCOG04091">
    <property type="taxonomic scope" value="Archaea"/>
</dbReference>
<dbReference type="HOGENOM" id="CLU_098428_1_1_2"/>
<dbReference type="Proteomes" id="UP000001169">
    <property type="component" value="Chromosome I"/>
</dbReference>
<dbReference type="GO" id="GO:1990904">
    <property type="term" value="C:ribonucleoprotein complex"/>
    <property type="evidence" value="ECO:0007669"/>
    <property type="project" value="UniProtKB-KW"/>
</dbReference>
<dbReference type="GO" id="GO:0005840">
    <property type="term" value="C:ribosome"/>
    <property type="evidence" value="ECO:0007669"/>
    <property type="project" value="UniProtKB-KW"/>
</dbReference>
<dbReference type="GO" id="GO:0019843">
    <property type="term" value="F:rRNA binding"/>
    <property type="evidence" value="ECO:0007669"/>
    <property type="project" value="UniProtKB-UniRule"/>
</dbReference>
<dbReference type="GO" id="GO:0003735">
    <property type="term" value="F:structural constituent of ribosome"/>
    <property type="evidence" value="ECO:0007669"/>
    <property type="project" value="InterPro"/>
</dbReference>
<dbReference type="GO" id="GO:0006412">
    <property type="term" value="P:translation"/>
    <property type="evidence" value="ECO:0007669"/>
    <property type="project" value="UniProtKB-UniRule"/>
</dbReference>
<dbReference type="FunFam" id="3.30.1490.10:FF:000002">
    <property type="entry name" value="40S ribosomal protein S15a"/>
    <property type="match status" value="1"/>
</dbReference>
<dbReference type="Gene3D" id="3.30.1370.30">
    <property type="match status" value="1"/>
</dbReference>
<dbReference type="Gene3D" id="3.30.1490.10">
    <property type="match status" value="1"/>
</dbReference>
<dbReference type="HAMAP" id="MF_01302_A">
    <property type="entry name" value="Ribosomal_uS8_A"/>
    <property type="match status" value="1"/>
</dbReference>
<dbReference type="InterPro" id="IPR000630">
    <property type="entry name" value="Ribosomal_uS8"/>
</dbReference>
<dbReference type="InterPro" id="IPR047863">
    <property type="entry name" value="Ribosomal_uS8_CS"/>
</dbReference>
<dbReference type="InterPro" id="IPR035987">
    <property type="entry name" value="Ribosomal_uS8_sf"/>
</dbReference>
<dbReference type="NCBIfam" id="NF003115">
    <property type="entry name" value="PRK04034.1"/>
    <property type="match status" value="1"/>
</dbReference>
<dbReference type="PANTHER" id="PTHR11758">
    <property type="entry name" value="40S RIBOSOMAL PROTEIN S15A"/>
    <property type="match status" value="1"/>
</dbReference>
<dbReference type="Pfam" id="PF00410">
    <property type="entry name" value="Ribosomal_S8"/>
    <property type="match status" value="1"/>
</dbReference>
<dbReference type="SUPFAM" id="SSF56047">
    <property type="entry name" value="Ribosomal protein S8"/>
    <property type="match status" value="1"/>
</dbReference>
<dbReference type="PROSITE" id="PS00053">
    <property type="entry name" value="RIBOSOMAL_S8"/>
    <property type="match status" value="1"/>
</dbReference>
<reference key="1">
    <citation type="journal article" date="1991" name="Mol. Gen. Genet.">
        <title>Organization and nucleotide sequence of ten ribosomal protein genes from the region equivalent to the spectinomycin operon in the archaebacterium Halobacterium marismortui.</title>
        <authorList>
            <person name="Scholzen T."/>
            <person name="Arndt E."/>
        </authorList>
    </citation>
    <scope>NUCLEOTIDE SEQUENCE [GENOMIC DNA]</scope>
</reference>
<reference key="2">
    <citation type="journal article" date="2004" name="Genome Res.">
        <title>Genome sequence of Haloarcula marismortui: a halophilic archaeon from the Dead Sea.</title>
        <authorList>
            <person name="Baliga N.S."/>
            <person name="Bonneau R."/>
            <person name="Facciotti M.T."/>
            <person name="Pan M."/>
            <person name="Glusman G."/>
            <person name="Deutsch E.W."/>
            <person name="Shannon P."/>
            <person name="Chiu Y."/>
            <person name="Weng R.S."/>
            <person name="Gan R.R."/>
            <person name="Hung P."/>
            <person name="Date S.V."/>
            <person name="Marcotte E."/>
            <person name="Hood L."/>
            <person name="Ng W.V."/>
        </authorList>
    </citation>
    <scope>NUCLEOTIDE SEQUENCE [LARGE SCALE GENOMIC DNA]</scope>
    <source>
        <strain>ATCC 43049 / DSM 3752 / JCM 8966 / VKM B-1809</strain>
    </source>
</reference>
<reference key="3">
    <citation type="journal article" date="1987" name="J. Biol. Chem.">
        <title>The primary structures of ribosomal proteins S14 and S16 from the archaebacterium Halobacterium marismortui. Comparison with eubacterial and eukaryotic ribosomal proteins.</title>
        <authorList>
            <person name="Kimura J."/>
            <person name="Kimura M."/>
        </authorList>
    </citation>
    <scope>PROTEIN SEQUENCE OF 2-130</scope>
    <scope>SUBUNIT</scope>
</reference>
<gene>
    <name evidence="1" type="primary">rps8</name>
    <name type="ordered locus">rrnAC1597</name>
</gene>
<evidence type="ECO:0000255" key="1">
    <source>
        <dbReference type="HAMAP-Rule" id="MF_01302"/>
    </source>
</evidence>
<evidence type="ECO:0000269" key="2">
    <source>
    </source>
</evidence>
<evidence type="ECO:0000305" key="3"/>
<accession>P12742</accession>
<accession>Q5V1T7</accession>